<protein>
    <recommendedName>
        <fullName evidence="1">Oxygen-dependent choline dehydrogenase</fullName>
        <shortName evidence="1">CDH</shortName>
        <shortName evidence="1">CHD</shortName>
        <ecNumber evidence="1">1.1.99.1</ecNumber>
    </recommendedName>
    <alternativeName>
        <fullName evidence="1">Betaine aldehyde dehydrogenase</fullName>
        <shortName evidence="1">BADH</shortName>
        <ecNumber evidence="1">1.2.1.8</ecNumber>
    </alternativeName>
</protein>
<name>BETA_ACIB5</name>
<organism>
    <name type="scientific">Acinetobacter baumannii (strain AB0057)</name>
    <dbReference type="NCBI Taxonomy" id="480119"/>
    <lineage>
        <taxon>Bacteria</taxon>
        <taxon>Pseudomonadati</taxon>
        <taxon>Pseudomonadota</taxon>
        <taxon>Gammaproteobacteria</taxon>
        <taxon>Moraxellales</taxon>
        <taxon>Moraxellaceae</taxon>
        <taxon>Acinetobacter</taxon>
        <taxon>Acinetobacter calcoaceticus/baumannii complex</taxon>
    </lineage>
</organism>
<dbReference type="EC" id="1.1.99.1" evidence="1"/>
<dbReference type="EC" id="1.2.1.8" evidence="1"/>
<dbReference type="EMBL" id="CP001182">
    <property type="protein sequence ID" value="ACJ40794.1"/>
    <property type="molecule type" value="Genomic_DNA"/>
</dbReference>
<dbReference type="RefSeq" id="WP_001021934.1">
    <property type="nucleotide sequence ID" value="NC_011586.2"/>
</dbReference>
<dbReference type="SMR" id="B7I895"/>
<dbReference type="CAZy" id="AA3">
    <property type="family name" value="Auxiliary Activities 3"/>
</dbReference>
<dbReference type="GeneID" id="92892889"/>
<dbReference type="KEGG" id="abn:AB57_1002"/>
<dbReference type="HOGENOM" id="CLU_002865_7_1_6"/>
<dbReference type="UniPathway" id="UPA00529">
    <property type="reaction ID" value="UER00385"/>
</dbReference>
<dbReference type="Proteomes" id="UP000007094">
    <property type="component" value="Chromosome"/>
</dbReference>
<dbReference type="GO" id="GO:0016020">
    <property type="term" value="C:membrane"/>
    <property type="evidence" value="ECO:0007669"/>
    <property type="project" value="TreeGrafter"/>
</dbReference>
<dbReference type="GO" id="GO:0008802">
    <property type="term" value="F:betaine-aldehyde dehydrogenase (NAD+) activity"/>
    <property type="evidence" value="ECO:0007669"/>
    <property type="project" value="UniProtKB-EC"/>
</dbReference>
<dbReference type="GO" id="GO:0008812">
    <property type="term" value="F:choline dehydrogenase activity"/>
    <property type="evidence" value="ECO:0007669"/>
    <property type="project" value="UniProtKB-UniRule"/>
</dbReference>
<dbReference type="GO" id="GO:0050660">
    <property type="term" value="F:flavin adenine dinucleotide binding"/>
    <property type="evidence" value="ECO:0007669"/>
    <property type="project" value="InterPro"/>
</dbReference>
<dbReference type="GO" id="GO:0019285">
    <property type="term" value="P:glycine betaine biosynthetic process from choline"/>
    <property type="evidence" value="ECO:0007669"/>
    <property type="project" value="UniProtKB-UniRule"/>
</dbReference>
<dbReference type="Gene3D" id="3.50.50.60">
    <property type="entry name" value="FAD/NAD(P)-binding domain"/>
    <property type="match status" value="1"/>
</dbReference>
<dbReference type="Gene3D" id="3.30.560.10">
    <property type="entry name" value="Glucose Oxidase, domain 3"/>
    <property type="match status" value="1"/>
</dbReference>
<dbReference type="HAMAP" id="MF_00750">
    <property type="entry name" value="Choline_dehydrogen"/>
    <property type="match status" value="1"/>
</dbReference>
<dbReference type="InterPro" id="IPR011533">
    <property type="entry name" value="BetA"/>
</dbReference>
<dbReference type="InterPro" id="IPR036188">
    <property type="entry name" value="FAD/NAD-bd_sf"/>
</dbReference>
<dbReference type="InterPro" id="IPR012132">
    <property type="entry name" value="GMC_OxRdtase"/>
</dbReference>
<dbReference type="InterPro" id="IPR000172">
    <property type="entry name" value="GMC_OxRdtase_N"/>
</dbReference>
<dbReference type="InterPro" id="IPR007867">
    <property type="entry name" value="GMC_OxRtase_C"/>
</dbReference>
<dbReference type="NCBIfam" id="TIGR01810">
    <property type="entry name" value="betA"/>
    <property type="match status" value="1"/>
</dbReference>
<dbReference type="NCBIfam" id="NF002550">
    <property type="entry name" value="PRK02106.1"/>
    <property type="match status" value="1"/>
</dbReference>
<dbReference type="PANTHER" id="PTHR11552:SF147">
    <property type="entry name" value="CHOLINE DEHYDROGENASE, MITOCHONDRIAL"/>
    <property type="match status" value="1"/>
</dbReference>
<dbReference type="PANTHER" id="PTHR11552">
    <property type="entry name" value="GLUCOSE-METHANOL-CHOLINE GMC OXIDOREDUCTASE"/>
    <property type="match status" value="1"/>
</dbReference>
<dbReference type="Pfam" id="PF05199">
    <property type="entry name" value="GMC_oxred_C"/>
    <property type="match status" value="1"/>
</dbReference>
<dbReference type="Pfam" id="PF00732">
    <property type="entry name" value="GMC_oxred_N"/>
    <property type="match status" value="1"/>
</dbReference>
<dbReference type="PIRSF" id="PIRSF000137">
    <property type="entry name" value="Alcohol_oxidase"/>
    <property type="match status" value="1"/>
</dbReference>
<dbReference type="SUPFAM" id="SSF54373">
    <property type="entry name" value="FAD-linked reductases, C-terminal domain"/>
    <property type="match status" value="1"/>
</dbReference>
<dbReference type="SUPFAM" id="SSF51905">
    <property type="entry name" value="FAD/NAD(P)-binding domain"/>
    <property type="match status" value="1"/>
</dbReference>
<dbReference type="PROSITE" id="PS00623">
    <property type="entry name" value="GMC_OXRED_1"/>
    <property type="match status" value="1"/>
</dbReference>
<dbReference type="PROSITE" id="PS00624">
    <property type="entry name" value="GMC_OXRED_2"/>
    <property type="match status" value="1"/>
</dbReference>
<proteinExistence type="inferred from homology"/>
<feature type="chain" id="PRO_1000133316" description="Oxygen-dependent choline dehydrogenase">
    <location>
        <begin position="1"/>
        <end position="552"/>
    </location>
</feature>
<feature type="active site" description="Proton acceptor" evidence="1">
    <location>
        <position position="477"/>
    </location>
</feature>
<feature type="binding site" evidence="1">
    <location>
        <begin position="7"/>
        <end position="36"/>
    </location>
    <ligand>
        <name>FAD</name>
        <dbReference type="ChEBI" id="CHEBI:57692"/>
    </ligand>
</feature>
<accession>B7I895</accession>
<gene>
    <name evidence="1" type="primary">betA</name>
    <name type="ordered locus">AB57_1002</name>
</gene>
<reference key="1">
    <citation type="journal article" date="2008" name="J. Bacteriol.">
        <title>Comparative genome sequence analysis of multidrug-resistant Acinetobacter baumannii.</title>
        <authorList>
            <person name="Adams M.D."/>
            <person name="Goglin K."/>
            <person name="Molyneaux N."/>
            <person name="Hujer K.M."/>
            <person name="Lavender H."/>
            <person name="Jamison J.J."/>
            <person name="MacDonald I.J."/>
            <person name="Martin K.M."/>
            <person name="Russo T."/>
            <person name="Campagnari A.A."/>
            <person name="Hujer A.M."/>
            <person name="Bonomo R.A."/>
            <person name="Gill S.R."/>
        </authorList>
    </citation>
    <scope>NUCLEOTIDE SEQUENCE [LARGE SCALE GENOMIC DNA]</scope>
    <source>
        <strain>AB0057</strain>
    </source>
</reference>
<comment type="function">
    <text evidence="1">Involved in the biosynthesis of the osmoprotectant glycine betaine. Catalyzes the oxidation of choline to betaine aldehyde and betaine aldehyde to glycine betaine at the same rate.</text>
</comment>
<comment type="catalytic activity">
    <reaction evidence="1">
        <text>choline + A = betaine aldehyde + AH2</text>
        <dbReference type="Rhea" id="RHEA:17433"/>
        <dbReference type="ChEBI" id="CHEBI:13193"/>
        <dbReference type="ChEBI" id="CHEBI:15354"/>
        <dbReference type="ChEBI" id="CHEBI:15710"/>
        <dbReference type="ChEBI" id="CHEBI:17499"/>
        <dbReference type="EC" id="1.1.99.1"/>
    </reaction>
</comment>
<comment type="catalytic activity">
    <reaction evidence="1">
        <text>betaine aldehyde + NAD(+) + H2O = glycine betaine + NADH + 2 H(+)</text>
        <dbReference type="Rhea" id="RHEA:15305"/>
        <dbReference type="ChEBI" id="CHEBI:15377"/>
        <dbReference type="ChEBI" id="CHEBI:15378"/>
        <dbReference type="ChEBI" id="CHEBI:15710"/>
        <dbReference type="ChEBI" id="CHEBI:17750"/>
        <dbReference type="ChEBI" id="CHEBI:57540"/>
        <dbReference type="ChEBI" id="CHEBI:57945"/>
        <dbReference type="EC" id="1.2.1.8"/>
    </reaction>
</comment>
<comment type="cofactor">
    <cofactor evidence="1">
        <name>FAD</name>
        <dbReference type="ChEBI" id="CHEBI:57692"/>
    </cofactor>
</comment>
<comment type="pathway">
    <text evidence="1">Amine and polyamine biosynthesis; betaine biosynthesis via choline pathway; betaine aldehyde from choline (cytochrome c reductase route): step 1/1.</text>
</comment>
<comment type="similarity">
    <text evidence="1">Belongs to the GMC oxidoreductase family.</text>
</comment>
<keyword id="KW-0274">FAD</keyword>
<keyword id="KW-0285">Flavoprotein</keyword>
<keyword id="KW-0520">NAD</keyword>
<keyword id="KW-0560">Oxidoreductase</keyword>
<sequence>MNIKEYDYIIIGAGSAGNVLAARLTEDKDTTVLLLEAGGPDYRLDFRTQMPAALAYPLQGRRYNWAYLTDPEPHMNNRRMECGRGKGLGGSSLINGMCYIRGNAMDLEQWATHKGLENWTYADCLPYYKKAETRDIGGNDYHGDSGPVSVATPKNGNNVLFHAMVEAGVQAGYPRTDDLNGYQQEGFGPMDRTVTPKGRRSSTARGYLDMAKGRPNLTILTHATTNKILFNQKQAIGVEYIIGADQNNLQRALVKREVLLCAGAIASPQILQRSGVGQSTFLKSMDIDVVHDLPGVGENLQDHLEMYLQYKCKQPVSLYPALKWYNQPAIGAEWLFNGTGIGASNQFEAGGFIRSSDEFKWPNIQYHFLPVAINYNGSNAVKEHGFQAHVGSMRSPSRGRIKLKSKDPFAHPSILFNYMSTEQDWREFRDAIRITREIMHQPALDPYRGDEISPGKHLQTDAELDDFVRNHAETAYHPSCSCKMGEDEMAVVDGQGRVHGMNGLRVVDASIMPLIITGNLNATTIMIAEKIADQIRGREALPRSTAPFYVAS</sequence>
<evidence type="ECO:0000255" key="1">
    <source>
        <dbReference type="HAMAP-Rule" id="MF_00750"/>
    </source>
</evidence>